<sequence length="281" mass="32694">MILSLLSMNINYNSITSIKQILKERKIAPRKLWGQNYLINESIRQKIIESLDIKENEKIWEIGPGLGAMTDILLKKTNLLTAFEIDLKYSEILNEKFGKLKNFKLIKGDFLKKYPNENKNIDKIFSNLPYNIASKVISKLIEENFLKEMVLTVQKELADRITAKTNSKNYSSFTVLVQSHFTAIKIIDIGENNFYPAPKVKSTTLKLIPKKNNIKDFKEFNKLIRTVFSGRRKKLKNTIINFIKNKAILEENFLKEYLGKRPENISVEEFIQISNNLNAYH</sequence>
<gene>
    <name evidence="1" type="primary">rsmA</name>
    <name evidence="1" type="synonym">ksgA</name>
    <name type="ordered locus">BG0603</name>
</gene>
<organism>
    <name type="scientific">Borrelia garinii subsp. bavariensis (strain ATCC BAA-2496 / DSM 23469 / PBi)</name>
    <name type="common">Borreliella bavariensis</name>
    <dbReference type="NCBI Taxonomy" id="290434"/>
    <lineage>
        <taxon>Bacteria</taxon>
        <taxon>Pseudomonadati</taxon>
        <taxon>Spirochaetota</taxon>
        <taxon>Spirochaetia</taxon>
        <taxon>Spirochaetales</taxon>
        <taxon>Borreliaceae</taxon>
        <taxon>Borreliella</taxon>
    </lineage>
</organism>
<feature type="chain" id="PRO_0000101493" description="Ribosomal RNA small subunit methyltransferase A">
    <location>
        <begin position="1"/>
        <end position="281"/>
    </location>
</feature>
<feature type="binding site" evidence="1">
    <location>
        <position position="36"/>
    </location>
    <ligand>
        <name>S-adenosyl-L-methionine</name>
        <dbReference type="ChEBI" id="CHEBI:59789"/>
    </ligand>
</feature>
<feature type="binding site" evidence="1">
    <location>
        <position position="38"/>
    </location>
    <ligand>
        <name>S-adenosyl-L-methionine</name>
        <dbReference type="ChEBI" id="CHEBI:59789"/>
    </ligand>
</feature>
<feature type="binding site" evidence="1">
    <location>
        <position position="63"/>
    </location>
    <ligand>
        <name>S-adenosyl-L-methionine</name>
        <dbReference type="ChEBI" id="CHEBI:59789"/>
    </ligand>
</feature>
<feature type="binding site" evidence="1">
    <location>
        <position position="84"/>
    </location>
    <ligand>
        <name>S-adenosyl-L-methionine</name>
        <dbReference type="ChEBI" id="CHEBI:59789"/>
    </ligand>
</feature>
<feature type="binding site" evidence="1">
    <location>
        <position position="109"/>
    </location>
    <ligand>
        <name>S-adenosyl-L-methionine</name>
        <dbReference type="ChEBI" id="CHEBI:59789"/>
    </ligand>
</feature>
<feature type="binding site" evidence="1">
    <location>
        <position position="127"/>
    </location>
    <ligand>
        <name>S-adenosyl-L-methionine</name>
        <dbReference type="ChEBI" id="CHEBI:59789"/>
    </ligand>
</feature>
<proteinExistence type="inferred from homology"/>
<keyword id="KW-0963">Cytoplasm</keyword>
<keyword id="KW-0489">Methyltransferase</keyword>
<keyword id="KW-0694">RNA-binding</keyword>
<keyword id="KW-0698">rRNA processing</keyword>
<keyword id="KW-0949">S-adenosyl-L-methionine</keyword>
<keyword id="KW-0808">Transferase</keyword>
<name>RSMA_BORGP</name>
<evidence type="ECO:0000255" key="1">
    <source>
        <dbReference type="HAMAP-Rule" id="MF_00607"/>
    </source>
</evidence>
<dbReference type="EC" id="2.1.1.182" evidence="1"/>
<dbReference type="EMBL" id="CP000013">
    <property type="protein sequence ID" value="AAU07439.1"/>
    <property type="molecule type" value="Genomic_DNA"/>
</dbReference>
<dbReference type="RefSeq" id="WP_011193897.1">
    <property type="nucleotide sequence ID" value="NZ_CP028872.1"/>
</dbReference>
<dbReference type="SMR" id="Q660T2"/>
<dbReference type="GeneID" id="45161383"/>
<dbReference type="KEGG" id="bga:BG0603"/>
<dbReference type="eggNOG" id="COG0030">
    <property type="taxonomic scope" value="Bacteria"/>
</dbReference>
<dbReference type="HOGENOM" id="CLU_041220_0_1_12"/>
<dbReference type="OrthoDB" id="9814755at2"/>
<dbReference type="Proteomes" id="UP000002276">
    <property type="component" value="Chromosome"/>
</dbReference>
<dbReference type="GO" id="GO:0005829">
    <property type="term" value="C:cytosol"/>
    <property type="evidence" value="ECO:0007669"/>
    <property type="project" value="TreeGrafter"/>
</dbReference>
<dbReference type="GO" id="GO:0052908">
    <property type="term" value="F:16S rRNA (adenine(1518)-N(6)/adenine(1519)-N(6))-dimethyltransferase activity"/>
    <property type="evidence" value="ECO:0007669"/>
    <property type="project" value="UniProtKB-EC"/>
</dbReference>
<dbReference type="GO" id="GO:0003723">
    <property type="term" value="F:RNA binding"/>
    <property type="evidence" value="ECO:0007669"/>
    <property type="project" value="UniProtKB-KW"/>
</dbReference>
<dbReference type="CDD" id="cd02440">
    <property type="entry name" value="AdoMet_MTases"/>
    <property type="match status" value="1"/>
</dbReference>
<dbReference type="Gene3D" id="1.10.8.100">
    <property type="entry name" value="Ribosomal RNA adenine dimethylase-like, domain 2"/>
    <property type="match status" value="1"/>
</dbReference>
<dbReference type="Gene3D" id="3.40.50.150">
    <property type="entry name" value="Vaccinia Virus protein VP39"/>
    <property type="match status" value="1"/>
</dbReference>
<dbReference type="HAMAP" id="MF_00607">
    <property type="entry name" value="16SrRNA_methyltr_A"/>
    <property type="match status" value="1"/>
</dbReference>
<dbReference type="InterPro" id="IPR001737">
    <property type="entry name" value="KsgA/Erm"/>
</dbReference>
<dbReference type="InterPro" id="IPR023165">
    <property type="entry name" value="rRNA_Ade_diMease-like_C"/>
</dbReference>
<dbReference type="InterPro" id="IPR020596">
    <property type="entry name" value="rRNA_Ade_Mease_Trfase_CS"/>
</dbReference>
<dbReference type="InterPro" id="IPR020598">
    <property type="entry name" value="rRNA_Ade_methylase_Trfase_N"/>
</dbReference>
<dbReference type="InterPro" id="IPR011530">
    <property type="entry name" value="rRNA_adenine_dimethylase"/>
</dbReference>
<dbReference type="InterPro" id="IPR029063">
    <property type="entry name" value="SAM-dependent_MTases_sf"/>
</dbReference>
<dbReference type="NCBIfam" id="TIGR00755">
    <property type="entry name" value="ksgA"/>
    <property type="match status" value="1"/>
</dbReference>
<dbReference type="PANTHER" id="PTHR11727">
    <property type="entry name" value="DIMETHYLADENOSINE TRANSFERASE"/>
    <property type="match status" value="1"/>
</dbReference>
<dbReference type="PANTHER" id="PTHR11727:SF7">
    <property type="entry name" value="DIMETHYLADENOSINE TRANSFERASE-RELATED"/>
    <property type="match status" value="1"/>
</dbReference>
<dbReference type="Pfam" id="PF00398">
    <property type="entry name" value="RrnaAD"/>
    <property type="match status" value="1"/>
</dbReference>
<dbReference type="SMART" id="SM00650">
    <property type="entry name" value="rADc"/>
    <property type="match status" value="1"/>
</dbReference>
<dbReference type="SUPFAM" id="SSF53335">
    <property type="entry name" value="S-adenosyl-L-methionine-dependent methyltransferases"/>
    <property type="match status" value="1"/>
</dbReference>
<dbReference type="PROSITE" id="PS01131">
    <property type="entry name" value="RRNA_A_DIMETH"/>
    <property type="match status" value="1"/>
</dbReference>
<dbReference type="PROSITE" id="PS51689">
    <property type="entry name" value="SAM_RNA_A_N6_MT"/>
    <property type="match status" value="1"/>
</dbReference>
<protein>
    <recommendedName>
        <fullName evidence="1">Ribosomal RNA small subunit methyltransferase A</fullName>
        <ecNumber evidence="1">2.1.1.182</ecNumber>
    </recommendedName>
    <alternativeName>
        <fullName evidence="1">16S rRNA (adenine(1518)-N(6)/adenine(1519)-N(6))-dimethyltransferase</fullName>
    </alternativeName>
    <alternativeName>
        <fullName evidence="1">16S rRNA dimethyladenosine transferase</fullName>
    </alternativeName>
    <alternativeName>
        <fullName evidence="1">16S rRNA dimethylase</fullName>
    </alternativeName>
    <alternativeName>
        <fullName evidence="1">S-adenosylmethionine-6-N', N'-adenosyl(rRNA) dimethyltransferase</fullName>
    </alternativeName>
</protein>
<reference key="1">
    <citation type="journal article" date="2004" name="Nucleic Acids Res.">
        <title>Comparative analysis of the Borrelia garinii genome.</title>
        <authorList>
            <person name="Gloeckner G."/>
            <person name="Lehmann R."/>
            <person name="Romualdi A."/>
            <person name="Pradella S."/>
            <person name="Schulte-Spechtel U."/>
            <person name="Schilhabel M."/>
            <person name="Wilske B."/>
            <person name="Suehnel J."/>
            <person name="Platzer M."/>
        </authorList>
    </citation>
    <scope>NUCLEOTIDE SEQUENCE [LARGE SCALE GENOMIC DNA]</scope>
    <source>
        <strain>ATCC BAA-2496 / DSM 23469 / PBi</strain>
    </source>
</reference>
<comment type="function">
    <text evidence="1">Specifically dimethylates two adjacent adenosines (A1518 and A1519) in the loop of a conserved hairpin near the 3'-end of 16S rRNA in the 30S particle. May play a critical role in biogenesis of 30S subunits.</text>
</comment>
<comment type="catalytic activity">
    <reaction evidence="1">
        <text>adenosine(1518)/adenosine(1519) in 16S rRNA + 4 S-adenosyl-L-methionine = N(6)-dimethyladenosine(1518)/N(6)-dimethyladenosine(1519) in 16S rRNA + 4 S-adenosyl-L-homocysteine + 4 H(+)</text>
        <dbReference type="Rhea" id="RHEA:19609"/>
        <dbReference type="Rhea" id="RHEA-COMP:10232"/>
        <dbReference type="Rhea" id="RHEA-COMP:10233"/>
        <dbReference type="ChEBI" id="CHEBI:15378"/>
        <dbReference type="ChEBI" id="CHEBI:57856"/>
        <dbReference type="ChEBI" id="CHEBI:59789"/>
        <dbReference type="ChEBI" id="CHEBI:74411"/>
        <dbReference type="ChEBI" id="CHEBI:74493"/>
        <dbReference type="EC" id="2.1.1.182"/>
    </reaction>
</comment>
<comment type="subcellular location">
    <subcellularLocation>
        <location evidence="1">Cytoplasm</location>
    </subcellularLocation>
</comment>
<comment type="similarity">
    <text evidence="1">Belongs to the class I-like SAM-binding methyltransferase superfamily. rRNA adenine N(6)-methyltransferase family. RsmA subfamily.</text>
</comment>
<accession>Q660T2</accession>